<organism>
    <name type="scientific">Aeromonas salmonicida (strain A449)</name>
    <dbReference type="NCBI Taxonomy" id="382245"/>
    <lineage>
        <taxon>Bacteria</taxon>
        <taxon>Pseudomonadati</taxon>
        <taxon>Pseudomonadota</taxon>
        <taxon>Gammaproteobacteria</taxon>
        <taxon>Aeromonadales</taxon>
        <taxon>Aeromonadaceae</taxon>
        <taxon>Aeromonas</taxon>
    </lineage>
</organism>
<name>RNH_AERS4</name>
<feature type="chain" id="PRO_1000074632" description="Ribonuclease H">
    <location>
        <begin position="1"/>
        <end position="154"/>
    </location>
</feature>
<feature type="domain" description="RNase H type-1" evidence="2">
    <location>
        <begin position="1"/>
        <end position="142"/>
    </location>
</feature>
<feature type="region of interest" description="Disordered" evidence="3">
    <location>
        <begin position="126"/>
        <end position="154"/>
    </location>
</feature>
<feature type="compositionally biased region" description="Basic and acidic residues" evidence="3">
    <location>
        <begin position="126"/>
        <end position="147"/>
    </location>
</feature>
<feature type="binding site" evidence="1">
    <location>
        <position position="10"/>
    </location>
    <ligand>
        <name>Mg(2+)</name>
        <dbReference type="ChEBI" id="CHEBI:18420"/>
        <label>1</label>
    </ligand>
</feature>
<feature type="binding site" evidence="1">
    <location>
        <position position="10"/>
    </location>
    <ligand>
        <name>Mg(2+)</name>
        <dbReference type="ChEBI" id="CHEBI:18420"/>
        <label>2</label>
    </ligand>
</feature>
<feature type="binding site" evidence="1">
    <location>
        <position position="48"/>
    </location>
    <ligand>
        <name>Mg(2+)</name>
        <dbReference type="ChEBI" id="CHEBI:18420"/>
        <label>1</label>
    </ligand>
</feature>
<feature type="binding site" evidence="1">
    <location>
        <position position="70"/>
    </location>
    <ligand>
        <name>Mg(2+)</name>
        <dbReference type="ChEBI" id="CHEBI:18420"/>
        <label>1</label>
    </ligand>
</feature>
<feature type="binding site" evidence="1">
    <location>
        <position position="134"/>
    </location>
    <ligand>
        <name>Mg(2+)</name>
        <dbReference type="ChEBI" id="CHEBI:18420"/>
        <label>2</label>
    </ligand>
</feature>
<gene>
    <name evidence="1" type="primary">rnhA</name>
    <name type="ordered locus">ASA_2788</name>
</gene>
<proteinExistence type="inferred from homology"/>
<sequence length="154" mass="17327">MLKHIDLYTDGSCLGNPGPGGYGAVLVYGDHRKEISGGFRLTTNNRMELMAAIMGLRTLNAACQVRLTTDSQYVRQGITQWIIGWKKKGWMTSNRQPVKNVDLWKELDAEVARHQIEWLWVKGHSGHPENERCDELARDAASGKELAEDTGYQP</sequence>
<protein>
    <recommendedName>
        <fullName evidence="1">Ribonuclease H</fullName>
        <shortName evidence="1">RNase H</shortName>
        <ecNumber evidence="1">3.1.26.4</ecNumber>
    </recommendedName>
</protein>
<dbReference type="EC" id="3.1.26.4" evidence="1"/>
<dbReference type="EMBL" id="CP000644">
    <property type="protein sequence ID" value="ABO90806.1"/>
    <property type="molecule type" value="Genomic_DNA"/>
</dbReference>
<dbReference type="RefSeq" id="WP_005309827.1">
    <property type="nucleotide sequence ID" value="NC_009348.1"/>
</dbReference>
<dbReference type="SMR" id="A4SPI4"/>
<dbReference type="STRING" id="29491.GCA_000820065_00022"/>
<dbReference type="KEGG" id="asa:ASA_2788"/>
<dbReference type="eggNOG" id="COG0328">
    <property type="taxonomic scope" value="Bacteria"/>
</dbReference>
<dbReference type="HOGENOM" id="CLU_030894_6_0_6"/>
<dbReference type="Proteomes" id="UP000000225">
    <property type="component" value="Chromosome"/>
</dbReference>
<dbReference type="GO" id="GO:0005737">
    <property type="term" value="C:cytoplasm"/>
    <property type="evidence" value="ECO:0007669"/>
    <property type="project" value="UniProtKB-SubCell"/>
</dbReference>
<dbReference type="GO" id="GO:0000287">
    <property type="term" value="F:magnesium ion binding"/>
    <property type="evidence" value="ECO:0007669"/>
    <property type="project" value="UniProtKB-UniRule"/>
</dbReference>
<dbReference type="GO" id="GO:0003676">
    <property type="term" value="F:nucleic acid binding"/>
    <property type="evidence" value="ECO:0007669"/>
    <property type="project" value="InterPro"/>
</dbReference>
<dbReference type="GO" id="GO:0004523">
    <property type="term" value="F:RNA-DNA hybrid ribonuclease activity"/>
    <property type="evidence" value="ECO:0007669"/>
    <property type="project" value="UniProtKB-UniRule"/>
</dbReference>
<dbReference type="GO" id="GO:0043137">
    <property type="term" value="P:DNA replication, removal of RNA primer"/>
    <property type="evidence" value="ECO:0007669"/>
    <property type="project" value="TreeGrafter"/>
</dbReference>
<dbReference type="CDD" id="cd09278">
    <property type="entry name" value="RNase_HI_prokaryote_like"/>
    <property type="match status" value="1"/>
</dbReference>
<dbReference type="FunFam" id="3.30.420.10:FF:000008">
    <property type="entry name" value="Ribonuclease H"/>
    <property type="match status" value="1"/>
</dbReference>
<dbReference type="Gene3D" id="3.30.420.10">
    <property type="entry name" value="Ribonuclease H-like superfamily/Ribonuclease H"/>
    <property type="match status" value="1"/>
</dbReference>
<dbReference type="HAMAP" id="MF_00042">
    <property type="entry name" value="RNase_H"/>
    <property type="match status" value="1"/>
</dbReference>
<dbReference type="InterPro" id="IPR050092">
    <property type="entry name" value="RNase_H"/>
</dbReference>
<dbReference type="InterPro" id="IPR012337">
    <property type="entry name" value="RNaseH-like_sf"/>
</dbReference>
<dbReference type="InterPro" id="IPR002156">
    <property type="entry name" value="RNaseH_domain"/>
</dbReference>
<dbReference type="InterPro" id="IPR036397">
    <property type="entry name" value="RNaseH_sf"/>
</dbReference>
<dbReference type="InterPro" id="IPR022892">
    <property type="entry name" value="RNaseHI"/>
</dbReference>
<dbReference type="NCBIfam" id="NF001236">
    <property type="entry name" value="PRK00203.1"/>
    <property type="match status" value="1"/>
</dbReference>
<dbReference type="PANTHER" id="PTHR10642">
    <property type="entry name" value="RIBONUCLEASE H1"/>
    <property type="match status" value="1"/>
</dbReference>
<dbReference type="PANTHER" id="PTHR10642:SF26">
    <property type="entry name" value="RIBONUCLEASE H1"/>
    <property type="match status" value="1"/>
</dbReference>
<dbReference type="Pfam" id="PF00075">
    <property type="entry name" value="RNase_H"/>
    <property type="match status" value="1"/>
</dbReference>
<dbReference type="SUPFAM" id="SSF53098">
    <property type="entry name" value="Ribonuclease H-like"/>
    <property type="match status" value="1"/>
</dbReference>
<dbReference type="PROSITE" id="PS50879">
    <property type="entry name" value="RNASE_H_1"/>
    <property type="match status" value="1"/>
</dbReference>
<comment type="function">
    <text evidence="1">Endonuclease that specifically degrades the RNA of RNA-DNA hybrids.</text>
</comment>
<comment type="catalytic activity">
    <reaction evidence="1">
        <text>Endonucleolytic cleavage to 5'-phosphomonoester.</text>
        <dbReference type="EC" id="3.1.26.4"/>
    </reaction>
</comment>
<comment type="cofactor">
    <cofactor evidence="1">
        <name>Mg(2+)</name>
        <dbReference type="ChEBI" id="CHEBI:18420"/>
    </cofactor>
    <text evidence="1">Binds 1 Mg(2+) ion per subunit. May bind a second metal ion at a regulatory site, or after substrate binding.</text>
</comment>
<comment type="subunit">
    <text evidence="1">Monomer.</text>
</comment>
<comment type="subcellular location">
    <subcellularLocation>
        <location evidence="1">Cytoplasm</location>
    </subcellularLocation>
</comment>
<comment type="similarity">
    <text evidence="1">Belongs to the RNase H family.</text>
</comment>
<reference key="1">
    <citation type="journal article" date="2008" name="BMC Genomics">
        <title>The genome of Aeromonas salmonicida subsp. salmonicida A449: insights into the evolution of a fish pathogen.</title>
        <authorList>
            <person name="Reith M.E."/>
            <person name="Singh R.K."/>
            <person name="Curtis B."/>
            <person name="Boyd J.M."/>
            <person name="Bouevitch A."/>
            <person name="Kimball J."/>
            <person name="Munholland J."/>
            <person name="Murphy C."/>
            <person name="Sarty D."/>
            <person name="Williams J."/>
            <person name="Nash J.H."/>
            <person name="Johnson S.C."/>
            <person name="Brown L.L."/>
        </authorList>
    </citation>
    <scope>NUCLEOTIDE SEQUENCE [LARGE SCALE GENOMIC DNA]</scope>
    <source>
        <strain>A449</strain>
    </source>
</reference>
<accession>A4SPI4</accession>
<evidence type="ECO:0000255" key="1">
    <source>
        <dbReference type="HAMAP-Rule" id="MF_00042"/>
    </source>
</evidence>
<evidence type="ECO:0000255" key="2">
    <source>
        <dbReference type="PROSITE-ProRule" id="PRU00408"/>
    </source>
</evidence>
<evidence type="ECO:0000256" key="3">
    <source>
        <dbReference type="SAM" id="MobiDB-lite"/>
    </source>
</evidence>
<keyword id="KW-0963">Cytoplasm</keyword>
<keyword id="KW-0255">Endonuclease</keyword>
<keyword id="KW-0378">Hydrolase</keyword>
<keyword id="KW-0460">Magnesium</keyword>
<keyword id="KW-0479">Metal-binding</keyword>
<keyword id="KW-0540">Nuclease</keyword>